<gene>
    <name type="primary">SLC22A7</name>
    <name type="synonym">OAT2</name>
</gene>
<accession>Q1RPP5</accession>
<dbReference type="EMBL" id="AM180267">
    <property type="protein sequence ID" value="CAJ55262.1"/>
    <property type="molecule type" value="mRNA"/>
</dbReference>
<dbReference type="RefSeq" id="NP_001038082.1">
    <property type="nucleotide sequence ID" value="NM_001044617.1"/>
</dbReference>
<dbReference type="SMR" id="Q1RPP5"/>
<dbReference type="FunCoup" id="Q1RPP5">
    <property type="interactions" value="207"/>
</dbReference>
<dbReference type="STRING" id="9823.ENSSSCP00000026455"/>
<dbReference type="PaxDb" id="9823-ENSSSCP00000026455"/>
<dbReference type="PeptideAtlas" id="Q1RPP5"/>
<dbReference type="Ensembl" id="ENSSSCT00000025126.4">
    <property type="protein sequence ID" value="ENSSSCP00000026455.1"/>
    <property type="gene ID" value="ENSSSCG00000027796.4"/>
</dbReference>
<dbReference type="Ensembl" id="ENSSSCT00015038913.1">
    <property type="protein sequence ID" value="ENSSSCP00015015472.1"/>
    <property type="gene ID" value="ENSSSCG00015029260.1"/>
</dbReference>
<dbReference type="Ensembl" id="ENSSSCT00030082328.1">
    <property type="protein sequence ID" value="ENSSSCP00030037805.1"/>
    <property type="gene ID" value="ENSSSCG00030058988.1"/>
</dbReference>
<dbReference type="Ensembl" id="ENSSSCT00035061153.1">
    <property type="protein sequence ID" value="ENSSSCP00035024624.1"/>
    <property type="gene ID" value="ENSSSCG00035045978.1"/>
</dbReference>
<dbReference type="Ensembl" id="ENSSSCT00040025551.1">
    <property type="protein sequence ID" value="ENSSSCP00040010785.1"/>
    <property type="gene ID" value="ENSSSCG00040018854.1"/>
</dbReference>
<dbReference type="Ensembl" id="ENSSSCT00055042083.1">
    <property type="protein sequence ID" value="ENSSSCP00055033509.1"/>
    <property type="gene ID" value="ENSSSCG00055021278.1"/>
</dbReference>
<dbReference type="Ensembl" id="ENSSSCT00060045405.1">
    <property type="protein sequence ID" value="ENSSSCP00060019443.1"/>
    <property type="gene ID" value="ENSSSCG00060033482.1"/>
</dbReference>
<dbReference type="Ensembl" id="ENSSSCT00070044873.1">
    <property type="protein sequence ID" value="ENSSSCP00070037804.1"/>
    <property type="gene ID" value="ENSSSCG00070022570.1"/>
</dbReference>
<dbReference type="Ensembl" id="ENSSSCT00085025582">
    <property type="protein sequence ID" value="ENSSSCP00085017742"/>
    <property type="gene ID" value="ENSSSCG00085013510"/>
</dbReference>
<dbReference type="Ensembl" id="ENSSSCT00090016611">
    <property type="protein sequence ID" value="ENSSSCP00090010666"/>
    <property type="gene ID" value="ENSSSCG00090009244"/>
</dbReference>
<dbReference type="Ensembl" id="ENSSSCT00105008814">
    <property type="protein sequence ID" value="ENSSSCP00105006406"/>
    <property type="gene ID" value="ENSSSCG00105004434"/>
</dbReference>
<dbReference type="Ensembl" id="ENSSSCT00110046544">
    <property type="protein sequence ID" value="ENSSSCP00110032730"/>
    <property type="gene ID" value="ENSSSCG00110024103"/>
</dbReference>
<dbReference type="Ensembl" id="ENSSSCT00115012392">
    <property type="protein sequence ID" value="ENSSSCP00115011703"/>
    <property type="gene ID" value="ENSSSCG00115007096"/>
</dbReference>
<dbReference type="GeneID" id="733693"/>
<dbReference type="KEGG" id="ssc:733693"/>
<dbReference type="CTD" id="10864"/>
<dbReference type="VGNC" id="VGNC:92983">
    <property type="gene designation" value="SLC22A7"/>
</dbReference>
<dbReference type="eggNOG" id="KOG0255">
    <property type="taxonomic scope" value="Eukaryota"/>
</dbReference>
<dbReference type="GeneTree" id="ENSGT00940000154922"/>
<dbReference type="HOGENOM" id="CLU_001265_33_3_1"/>
<dbReference type="InParanoid" id="Q1RPP5"/>
<dbReference type="OMA" id="AWMVIFF"/>
<dbReference type="OrthoDB" id="2544694at2759"/>
<dbReference type="TreeFam" id="TF315847"/>
<dbReference type="Reactome" id="R-SSC-561048">
    <property type="pathway name" value="Organic anion transport"/>
</dbReference>
<dbReference type="Reactome" id="R-SSC-9749641">
    <property type="pathway name" value="Aspirin ADME"/>
</dbReference>
<dbReference type="Proteomes" id="UP000008227">
    <property type="component" value="Chromosome 7"/>
</dbReference>
<dbReference type="Proteomes" id="UP000314985">
    <property type="component" value="Chromosome 7"/>
</dbReference>
<dbReference type="Proteomes" id="UP000694570">
    <property type="component" value="Unplaced"/>
</dbReference>
<dbReference type="Proteomes" id="UP000694571">
    <property type="component" value="Unplaced"/>
</dbReference>
<dbReference type="Proteomes" id="UP000694720">
    <property type="component" value="Unplaced"/>
</dbReference>
<dbReference type="Proteomes" id="UP000694722">
    <property type="component" value="Unplaced"/>
</dbReference>
<dbReference type="Proteomes" id="UP000694723">
    <property type="component" value="Unplaced"/>
</dbReference>
<dbReference type="Proteomes" id="UP000694724">
    <property type="component" value="Unplaced"/>
</dbReference>
<dbReference type="Proteomes" id="UP000694725">
    <property type="component" value="Unplaced"/>
</dbReference>
<dbReference type="Proteomes" id="UP000694726">
    <property type="component" value="Unplaced"/>
</dbReference>
<dbReference type="Proteomes" id="UP000694727">
    <property type="component" value="Unplaced"/>
</dbReference>
<dbReference type="Proteomes" id="UP000694728">
    <property type="component" value="Unplaced"/>
</dbReference>
<dbReference type="Bgee" id="ENSSSCG00000027796">
    <property type="expression patterns" value="Expressed in liver and 15 other cell types or tissues"/>
</dbReference>
<dbReference type="ExpressionAtlas" id="Q1RPP5">
    <property type="expression patterns" value="baseline and differential"/>
</dbReference>
<dbReference type="GO" id="GO:0016324">
    <property type="term" value="C:apical plasma membrane"/>
    <property type="evidence" value="ECO:0000250"/>
    <property type="project" value="UniProtKB"/>
</dbReference>
<dbReference type="GO" id="GO:0009925">
    <property type="term" value="C:basal plasma membrane"/>
    <property type="evidence" value="ECO:0000250"/>
    <property type="project" value="UniProtKB"/>
</dbReference>
<dbReference type="GO" id="GO:0016323">
    <property type="term" value="C:basolateral plasma membrane"/>
    <property type="evidence" value="ECO:0000250"/>
    <property type="project" value="UniProtKB"/>
</dbReference>
<dbReference type="GO" id="GO:0005886">
    <property type="term" value="C:plasma membrane"/>
    <property type="evidence" value="ECO:0000250"/>
    <property type="project" value="UniProtKB"/>
</dbReference>
<dbReference type="GO" id="GO:0015139">
    <property type="term" value="F:alpha-ketoglutarate transmembrane transporter activity"/>
    <property type="evidence" value="ECO:0000250"/>
    <property type="project" value="UniProtKB"/>
</dbReference>
<dbReference type="GO" id="GO:0008514">
    <property type="term" value="F:organic anion transmembrane transporter activity"/>
    <property type="evidence" value="ECO:0000250"/>
    <property type="project" value="UniProtKB"/>
</dbReference>
<dbReference type="GO" id="GO:0015132">
    <property type="term" value="F:prostaglandin transmembrane transporter activity"/>
    <property type="evidence" value="ECO:0000250"/>
    <property type="project" value="UniProtKB"/>
</dbReference>
<dbReference type="GO" id="GO:0015347">
    <property type="term" value="F:sodium-independent organic anion transmembrane transporter activity"/>
    <property type="evidence" value="ECO:0000250"/>
    <property type="project" value="UniProtKB"/>
</dbReference>
<dbReference type="GO" id="GO:0022857">
    <property type="term" value="F:transmembrane transporter activity"/>
    <property type="evidence" value="ECO:0000250"/>
    <property type="project" value="UniProtKB"/>
</dbReference>
<dbReference type="GO" id="GO:0015742">
    <property type="term" value="P:alpha-ketoglutarate transport"/>
    <property type="evidence" value="ECO:0000250"/>
    <property type="project" value="UniProtKB"/>
</dbReference>
<dbReference type="GO" id="GO:0006811">
    <property type="term" value="P:monoatomic ion transport"/>
    <property type="evidence" value="ECO:0007669"/>
    <property type="project" value="UniProtKB-KW"/>
</dbReference>
<dbReference type="GO" id="GO:0015732">
    <property type="term" value="P:prostaglandin transport"/>
    <property type="evidence" value="ECO:0000250"/>
    <property type="project" value="UniProtKB"/>
</dbReference>
<dbReference type="FunFam" id="1.20.1250.20:FF:000170">
    <property type="entry name" value="Solute carrier family 22 member 7"/>
    <property type="match status" value="1"/>
</dbReference>
<dbReference type="Gene3D" id="1.20.1250.20">
    <property type="entry name" value="MFS general substrate transporter like domains"/>
    <property type="match status" value="1"/>
</dbReference>
<dbReference type="InterPro" id="IPR011701">
    <property type="entry name" value="MFS"/>
</dbReference>
<dbReference type="InterPro" id="IPR020846">
    <property type="entry name" value="MFS_dom"/>
</dbReference>
<dbReference type="InterPro" id="IPR036259">
    <property type="entry name" value="MFS_trans_sf"/>
</dbReference>
<dbReference type="InterPro" id="IPR004749">
    <property type="entry name" value="Orgcat_transp/SVOP"/>
</dbReference>
<dbReference type="NCBIfam" id="TIGR00898">
    <property type="entry name" value="2A0119"/>
    <property type="match status" value="1"/>
</dbReference>
<dbReference type="PANTHER" id="PTHR24064">
    <property type="entry name" value="SOLUTE CARRIER FAMILY 22 MEMBER"/>
    <property type="match status" value="1"/>
</dbReference>
<dbReference type="Pfam" id="PF07690">
    <property type="entry name" value="MFS_1"/>
    <property type="match status" value="1"/>
</dbReference>
<dbReference type="SUPFAM" id="SSF103473">
    <property type="entry name" value="MFS general substrate transporter"/>
    <property type="match status" value="1"/>
</dbReference>
<dbReference type="PROSITE" id="PS50850">
    <property type="entry name" value="MFS"/>
    <property type="match status" value="1"/>
</dbReference>
<comment type="function">
    <text evidence="2">Functions as a Na(+)-independent bidirectional multispecific transporter. Contributes to the renal and hepatic elimination of endogenous organic compounds from the systemic circulation into the urine and bile, respectively. Capable of transporting a wide range of purine and pyrimidine nucleobases, nucleosides and nucleotides, with cGMP, 2'deoxyguanosine and GMP being the preferred substrates. Functions as a pH- and chloride-independent cGMP bidirectional facilitative transporter that can regulate both intracellular and extracellular levels of cGMP and may be involved in cGMP signaling pathways. Mediates orotate/glutamate bidirectional exchange and most likely display a physiological role in hepatic release of glutamate into the blood. Involved in renal secretion and possible reabsorption of creatinine. Able to uptake prostaglandin E2 (PGE2) and may contribute to PGE2 renal excretion. Also transports alpha-ketoglutarate and urate. Apart from the orotate/glutamate exchange, the counterions for the uptake of other SLC22A7/OAT2 substrates remain to be identified.</text>
</comment>
<comment type="catalytic activity">
    <reaction evidence="2">
        <text>orotate(out) + L-glutamate(in) = orotate(in) + L-glutamate(out)</text>
        <dbReference type="Rhea" id="RHEA:72043"/>
        <dbReference type="ChEBI" id="CHEBI:29985"/>
        <dbReference type="ChEBI" id="CHEBI:30839"/>
    </reaction>
</comment>
<comment type="catalytic activity">
    <reaction evidence="2">
        <text>3',5'-cyclic GMP(in) = 3',5'-cyclic GMP(out)</text>
        <dbReference type="Rhea" id="RHEA:76207"/>
        <dbReference type="ChEBI" id="CHEBI:57746"/>
    </reaction>
</comment>
<comment type="catalytic activity">
    <reaction evidence="2">
        <text>GMP(in) = GMP(out)</text>
        <dbReference type="Rhea" id="RHEA:76211"/>
        <dbReference type="ChEBI" id="CHEBI:58115"/>
    </reaction>
</comment>
<comment type="catalytic activity">
    <reaction evidence="2">
        <text>2'-deoxyguanosine(in) = 2'-deoxyguanosine(out)</text>
        <dbReference type="Rhea" id="RHEA:76215"/>
        <dbReference type="ChEBI" id="CHEBI:17172"/>
    </reaction>
</comment>
<comment type="catalytic activity">
    <reaction evidence="2">
        <text>GDP(in) = GDP(out)</text>
        <dbReference type="Rhea" id="RHEA:76219"/>
        <dbReference type="ChEBI" id="CHEBI:58189"/>
    </reaction>
</comment>
<comment type="catalytic activity">
    <reaction evidence="2">
        <text>guanosine(in) = guanosine(out)</text>
        <dbReference type="Rhea" id="RHEA:75371"/>
        <dbReference type="ChEBI" id="CHEBI:16750"/>
    </reaction>
</comment>
<comment type="catalytic activity">
    <reaction evidence="2">
        <text>GTP(in) = GTP(out)</text>
        <dbReference type="Rhea" id="RHEA:75787"/>
        <dbReference type="ChEBI" id="CHEBI:37565"/>
    </reaction>
</comment>
<comment type="catalytic activity">
    <reaction evidence="2">
        <text>3',5'-cyclic AMP(in) = 3',5'-cyclic AMP(out)</text>
        <dbReference type="Rhea" id="RHEA:76223"/>
        <dbReference type="ChEBI" id="CHEBI:58165"/>
    </reaction>
</comment>
<comment type="catalytic activity">
    <reaction evidence="2">
        <text>creatinine(in) = creatinine(out)</text>
        <dbReference type="Rhea" id="RHEA:74539"/>
        <dbReference type="ChEBI" id="CHEBI:16737"/>
    </reaction>
</comment>
<comment type="catalytic activity">
    <reaction evidence="2">
        <text>prostaglandin E2(out) = prostaglandin E2(in)</text>
        <dbReference type="Rhea" id="RHEA:50984"/>
        <dbReference type="ChEBI" id="CHEBI:606564"/>
    </reaction>
</comment>
<comment type="catalytic activity">
    <reaction evidence="2">
        <text>2-oxoglutarate(in) = 2-oxoglutarate(out)</text>
        <dbReference type="Rhea" id="RHEA:76231"/>
        <dbReference type="ChEBI" id="CHEBI:16810"/>
    </reaction>
</comment>
<comment type="catalytic activity">
    <reaction evidence="1">
        <text>glutarate(in) = glutarate(out)</text>
        <dbReference type="Rhea" id="RHEA:76251"/>
        <dbReference type="ChEBI" id="CHEBI:30921"/>
    </reaction>
</comment>
<comment type="catalytic activity">
    <reaction evidence="2">
        <text>urate(out) = urate(in)</text>
        <dbReference type="Rhea" id="RHEA:60368"/>
        <dbReference type="ChEBI" id="CHEBI:17775"/>
    </reaction>
</comment>
<comment type="catalytic activity">
    <reaction evidence="2">
        <text>estrone 3-sulfate(out) = estrone 3-sulfate(in)</text>
        <dbReference type="Rhea" id="RHEA:71835"/>
        <dbReference type="ChEBI" id="CHEBI:60050"/>
    </reaction>
</comment>
<comment type="subcellular location">
    <subcellularLocation>
        <location evidence="2">Basolateral cell membrane</location>
        <topology evidence="5">Multi-pass membrane protein</topology>
    </subcellularLocation>
    <subcellularLocation>
        <location evidence="2">Apical cell membrane</location>
        <topology evidence="5">Multi-pass membrane protein</topology>
    </subcellularLocation>
    <subcellularLocation>
        <location evidence="2">Cell membrane</location>
        <topology evidence="5">Multi-pass membrane protein</topology>
    </subcellularLocation>
</comment>
<comment type="similarity">
    <text evidence="5">Belongs to the major facilitator (TC 2.A.1) superfamily. Organic cation transporter (TC 2.A.1.19) family.</text>
</comment>
<sequence>MAFEELLDKVGGFGPFQLWNVALLALPRVLLPMHFLLPIFLTAVPAHRCALPGAPANFSHQDAWLEAHLPREPDGRFSSCLRFTHSRALPNTTLWGLGQSPGEQLEGEPSTVPCPQGWEYDHSEFSSTIATEWDLVCEQKGLNRATSTFFFAGVLVGAVAFGYLSDRFGRRRLLLVAYVSALVLGLVSAASVSYTMFAITRTLTGTALAGFTIIVMPLELEWLDVGHRTVAGVLSSTFWTGGVMLLALVGYLIRDWRWLLLAVTLPCAPGILSLWWVPESARWLLTQGRVEDAHRYLLRCARLNGRPVGEDGLSREALSKVAAAERVVRRPSYVDLFRTPRLRHISLCCMVVWFGVNFSYYGLSLDVSGLGLNVYQTQLLFGAVELPSKLLVYLSVRHAGRRLTLAGTLLGTSLSLGFRLLVSSEMKSWSTALAVLGKGFSEAAFTTAYLFTSELYPTVLRQTGMGLTALVGRLGGSLAPLAALLDGVWLSLPKLAYGGIALLAACTALLLPETKQAQLPETIQDVERKSAPSSLQEEEMPMKQVQD</sequence>
<name>S22A7_PIG</name>
<protein>
    <recommendedName>
        <fullName evidence="2">Solute carrier family 22 member 7</fullName>
    </recommendedName>
    <alternativeName>
        <fullName evidence="2">Organic anion transporter 2</fullName>
    </alternativeName>
</protein>
<organism>
    <name type="scientific">Sus scrofa</name>
    <name type="common">Pig</name>
    <dbReference type="NCBI Taxonomy" id="9823"/>
    <lineage>
        <taxon>Eukaryota</taxon>
        <taxon>Metazoa</taxon>
        <taxon>Chordata</taxon>
        <taxon>Craniata</taxon>
        <taxon>Vertebrata</taxon>
        <taxon>Euteleostomi</taxon>
        <taxon>Mammalia</taxon>
        <taxon>Eutheria</taxon>
        <taxon>Laurasiatheria</taxon>
        <taxon>Artiodactyla</taxon>
        <taxon>Suina</taxon>
        <taxon>Suidae</taxon>
        <taxon>Sus</taxon>
    </lineage>
</organism>
<evidence type="ECO:0000250" key="1">
    <source>
        <dbReference type="UniProtKB" id="Q91WU2"/>
    </source>
</evidence>
<evidence type="ECO:0000250" key="2">
    <source>
        <dbReference type="UniProtKB" id="Q9Y694"/>
    </source>
</evidence>
<evidence type="ECO:0000255" key="3"/>
<evidence type="ECO:0000256" key="4">
    <source>
        <dbReference type="SAM" id="MobiDB-lite"/>
    </source>
</evidence>
<evidence type="ECO:0000305" key="5"/>
<feature type="chain" id="PRO_0000317483" description="Solute carrier family 22 member 7">
    <location>
        <begin position="1"/>
        <end position="547"/>
    </location>
</feature>
<feature type="transmembrane region" description="Helical" evidence="3">
    <location>
        <begin position="21"/>
        <end position="41"/>
    </location>
</feature>
<feature type="transmembrane region" description="Helical" evidence="3">
    <location>
        <begin position="145"/>
        <end position="165"/>
    </location>
</feature>
<feature type="transmembrane region" description="Helical" evidence="3">
    <location>
        <begin position="173"/>
        <end position="193"/>
    </location>
</feature>
<feature type="transmembrane region" description="Helical" evidence="3">
    <location>
        <begin position="203"/>
        <end position="223"/>
    </location>
</feature>
<feature type="transmembrane region" description="Helical" evidence="3">
    <location>
        <begin position="233"/>
        <end position="253"/>
    </location>
</feature>
<feature type="transmembrane region" description="Helical" evidence="3">
    <location>
        <begin position="258"/>
        <end position="278"/>
    </location>
</feature>
<feature type="transmembrane region" description="Helical" evidence="3">
    <location>
        <begin position="345"/>
        <end position="365"/>
    </location>
</feature>
<feature type="transmembrane region" description="Helical" evidence="3">
    <location>
        <begin position="374"/>
        <end position="396"/>
    </location>
</feature>
<feature type="transmembrane region" description="Helical" evidence="3">
    <location>
        <begin position="403"/>
        <end position="423"/>
    </location>
</feature>
<feature type="transmembrane region" description="Helical" evidence="3">
    <location>
        <begin position="431"/>
        <end position="451"/>
    </location>
</feature>
<feature type="transmembrane region" description="Helical" evidence="3">
    <location>
        <begin position="465"/>
        <end position="485"/>
    </location>
</feature>
<feature type="transmembrane region" description="Helical" evidence="3">
    <location>
        <begin position="492"/>
        <end position="512"/>
    </location>
</feature>
<feature type="region of interest" description="Disordered" evidence="4">
    <location>
        <begin position="521"/>
        <end position="547"/>
    </location>
</feature>
<keyword id="KW-1003">Cell membrane</keyword>
<keyword id="KW-0406">Ion transport</keyword>
<keyword id="KW-0472">Membrane</keyword>
<keyword id="KW-1185">Reference proteome</keyword>
<keyword id="KW-0812">Transmembrane</keyword>
<keyword id="KW-1133">Transmembrane helix</keyword>
<keyword id="KW-0813">Transport</keyword>
<reference key="1">
    <citation type="submission" date="2005-12" db="EMBL/GenBank/DDBJ databases">
        <title>Organic anion transporter 2 (OAT2) facilitates basolateral transport of uric acid in liver and kidneys.</title>
        <authorList>
            <person name="Bahn A."/>
            <person name="Krick W."/>
            <person name="Braun I.M."/>
            <person name="Hagos Y."/>
            <person name="Burckhardt G."/>
        </authorList>
    </citation>
    <scope>NUCLEOTIDE SEQUENCE [MRNA]</scope>
</reference>
<proteinExistence type="evidence at transcript level"/>